<sequence length="95" mass="9979">MSIKPLHDRVVVKPIEADEVSAGGIVIPDSAKEKSTKGEVVAIGAGKPLDNGSLRAPVVKVGDKVIYGQYAGSSYKSEGVEYKVLREDDILAVIG</sequence>
<gene>
    <name evidence="1" type="primary">groES</name>
    <name evidence="1" type="synonym">groS</name>
    <name type="ordered locus">XCC0522</name>
</gene>
<keyword id="KW-0143">Chaperone</keyword>
<keyword id="KW-0963">Cytoplasm</keyword>
<keyword id="KW-1185">Reference proteome</keyword>
<dbReference type="EMBL" id="AE008922">
    <property type="protein sequence ID" value="AAM39838.1"/>
    <property type="molecule type" value="Genomic_DNA"/>
</dbReference>
<dbReference type="RefSeq" id="NP_635914.1">
    <property type="nucleotide sequence ID" value="NC_003902.1"/>
</dbReference>
<dbReference type="RefSeq" id="WP_003483210.1">
    <property type="nucleotide sequence ID" value="NC_003902.1"/>
</dbReference>
<dbReference type="SMR" id="P0A0R6"/>
<dbReference type="STRING" id="190485.XCC0522"/>
<dbReference type="EnsemblBacteria" id="AAM39838">
    <property type="protein sequence ID" value="AAM39838"/>
    <property type="gene ID" value="XCC0522"/>
</dbReference>
<dbReference type="KEGG" id="xcc:XCC0522"/>
<dbReference type="PATRIC" id="fig|190485.4.peg.575"/>
<dbReference type="eggNOG" id="COG0234">
    <property type="taxonomic scope" value="Bacteria"/>
</dbReference>
<dbReference type="HOGENOM" id="CLU_132825_2_0_6"/>
<dbReference type="OrthoDB" id="9806791at2"/>
<dbReference type="PRO" id="PR:P0A0R6"/>
<dbReference type="Proteomes" id="UP000001010">
    <property type="component" value="Chromosome"/>
</dbReference>
<dbReference type="GO" id="GO:0005737">
    <property type="term" value="C:cytoplasm"/>
    <property type="evidence" value="ECO:0007669"/>
    <property type="project" value="UniProtKB-SubCell"/>
</dbReference>
<dbReference type="GO" id="GO:0005524">
    <property type="term" value="F:ATP binding"/>
    <property type="evidence" value="ECO:0007669"/>
    <property type="project" value="InterPro"/>
</dbReference>
<dbReference type="GO" id="GO:0046872">
    <property type="term" value="F:metal ion binding"/>
    <property type="evidence" value="ECO:0000318"/>
    <property type="project" value="GO_Central"/>
</dbReference>
<dbReference type="GO" id="GO:0044183">
    <property type="term" value="F:protein folding chaperone"/>
    <property type="evidence" value="ECO:0007669"/>
    <property type="project" value="InterPro"/>
</dbReference>
<dbReference type="GO" id="GO:0051087">
    <property type="term" value="F:protein-folding chaperone binding"/>
    <property type="evidence" value="ECO:0000318"/>
    <property type="project" value="GO_Central"/>
</dbReference>
<dbReference type="GO" id="GO:0051082">
    <property type="term" value="F:unfolded protein binding"/>
    <property type="evidence" value="ECO:0000318"/>
    <property type="project" value="GO_Central"/>
</dbReference>
<dbReference type="GO" id="GO:0051085">
    <property type="term" value="P:chaperone cofactor-dependent protein refolding"/>
    <property type="evidence" value="ECO:0000318"/>
    <property type="project" value="GO_Central"/>
</dbReference>
<dbReference type="CDD" id="cd00320">
    <property type="entry name" value="cpn10"/>
    <property type="match status" value="1"/>
</dbReference>
<dbReference type="FunFam" id="2.30.33.40:FF:000001">
    <property type="entry name" value="10 kDa chaperonin"/>
    <property type="match status" value="1"/>
</dbReference>
<dbReference type="Gene3D" id="2.30.33.40">
    <property type="entry name" value="GroES chaperonin"/>
    <property type="match status" value="1"/>
</dbReference>
<dbReference type="HAMAP" id="MF_00580">
    <property type="entry name" value="CH10"/>
    <property type="match status" value="1"/>
</dbReference>
<dbReference type="InterPro" id="IPR020818">
    <property type="entry name" value="Chaperonin_GroES"/>
</dbReference>
<dbReference type="InterPro" id="IPR037124">
    <property type="entry name" value="Chaperonin_GroES_sf"/>
</dbReference>
<dbReference type="InterPro" id="IPR018369">
    <property type="entry name" value="Chaprnonin_Cpn10_CS"/>
</dbReference>
<dbReference type="InterPro" id="IPR011032">
    <property type="entry name" value="GroES-like_sf"/>
</dbReference>
<dbReference type="NCBIfam" id="NF001527">
    <property type="entry name" value="PRK00364.1-2"/>
    <property type="match status" value="1"/>
</dbReference>
<dbReference type="NCBIfam" id="NF001531">
    <property type="entry name" value="PRK00364.2-2"/>
    <property type="match status" value="1"/>
</dbReference>
<dbReference type="NCBIfam" id="NF001533">
    <property type="entry name" value="PRK00364.2-4"/>
    <property type="match status" value="1"/>
</dbReference>
<dbReference type="PANTHER" id="PTHR10772">
    <property type="entry name" value="10 KDA HEAT SHOCK PROTEIN"/>
    <property type="match status" value="1"/>
</dbReference>
<dbReference type="PANTHER" id="PTHR10772:SF58">
    <property type="entry name" value="CO-CHAPERONIN GROES"/>
    <property type="match status" value="1"/>
</dbReference>
<dbReference type="Pfam" id="PF00166">
    <property type="entry name" value="Cpn10"/>
    <property type="match status" value="1"/>
</dbReference>
<dbReference type="PRINTS" id="PR00297">
    <property type="entry name" value="CHAPERONIN10"/>
</dbReference>
<dbReference type="SMART" id="SM00883">
    <property type="entry name" value="Cpn10"/>
    <property type="match status" value="1"/>
</dbReference>
<dbReference type="SUPFAM" id="SSF50129">
    <property type="entry name" value="GroES-like"/>
    <property type="match status" value="1"/>
</dbReference>
<dbReference type="PROSITE" id="PS00681">
    <property type="entry name" value="CHAPERONINS_CPN10"/>
    <property type="match status" value="1"/>
</dbReference>
<accession>P0A0R6</accession>
<accession>Q8RIT8</accession>
<name>CH10_XANCP</name>
<organism>
    <name type="scientific">Xanthomonas campestris pv. campestris (strain ATCC 33913 / DSM 3586 / NCPPB 528 / LMG 568 / P 25)</name>
    <dbReference type="NCBI Taxonomy" id="190485"/>
    <lineage>
        <taxon>Bacteria</taxon>
        <taxon>Pseudomonadati</taxon>
        <taxon>Pseudomonadota</taxon>
        <taxon>Gammaproteobacteria</taxon>
        <taxon>Lysobacterales</taxon>
        <taxon>Lysobacteraceae</taxon>
        <taxon>Xanthomonas</taxon>
    </lineage>
</organism>
<reference key="1">
    <citation type="journal article" date="2002" name="Nature">
        <title>Comparison of the genomes of two Xanthomonas pathogens with differing host specificities.</title>
        <authorList>
            <person name="da Silva A.C.R."/>
            <person name="Ferro J.A."/>
            <person name="Reinach F.C."/>
            <person name="Farah C.S."/>
            <person name="Furlan L.R."/>
            <person name="Quaggio R.B."/>
            <person name="Monteiro-Vitorello C.B."/>
            <person name="Van Sluys M.A."/>
            <person name="Almeida N.F. Jr."/>
            <person name="Alves L.M.C."/>
            <person name="do Amaral A.M."/>
            <person name="Bertolini M.C."/>
            <person name="Camargo L.E.A."/>
            <person name="Camarotte G."/>
            <person name="Cannavan F."/>
            <person name="Cardozo J."/>
            <person name="Chambergo F."/>
            <person name="Ciapina L.P."/>
            <person name="Cicarelli R.M.B."/>
            <person name="Coutinho L.L."/>
            <person name="Cursino-Santos J.R."/>
            <person name="El-Dorry H."/>
            <person name="Faria J.B."/>
            <person name="Ferreira A.J.S."/>
            <person name="Ferreira R.C.C."/>
            <person name="Ferro M.I.T."/>
            <person name="Formighieri E.F."/>
            <person name="Franco M.C."/>
            <person name="Greggio C.C."/>
            <person name="Gruber A."/>
            <person name="Katsuyama A.M."/>
            <person name="Kishi L.T."/>
            <person name="Leite R.P."/>
            <person name="Lemos E.G.M."/>
            <person name="Lemos M.V.F."/>
            <person name="Locali E.C."/>
            <person name="Machado M.A."/>
            <person name="Madeira A.M.B.N."/>
            <person name="Martinez-Rossi N.M."/>
            <person name="Martins E.C."/>
            <person name="Meidanis J."/>
            <person name="Menck C.F.M."/>
            <person name="Miyaki C.Y."/>
            <person name="Moon D.H."/>
            <person name="Moreira L.M."/>
            <person name="Novo M.T.M."/>
            <person name="Okura V.K."/>
            <person name="Oliveira M.C."/>
            <person name="Oliveira V.R."/>
            <person name="Pereira H.A."/>
            <person name="Rossi A."/>
            <person name="Sena J.A.D."/>
            <person name="Silva C."/>
            <person name="de Souza R.F."/>
            <person name="Spinola L.A.F."/>
            <person name="Takita M.A."/>
            <person name="Tamura R.E."/>
            <person name="Teixeira E.C."/>
            <person name="Tezza R.I.D."/>
            <person name="Trindade dos Santos M."/>
            <person name="Truffi D."/>
            <person name="Tsai S.M."/>
            <person name="White F.F."/>
            <person name="Setubal J.C."/>
            <person name="Kitajima J.P."/>
        </authorList>
    </citation>
    <scope>NUCLEOTIDE SEQUENCE [LARGE SCALE GENOMIC DNA]</scope>
    <source>
        <strain>ATCC 33913 / DSM 3586 / NCPPB 528 / LMG 568 / P 25</strain>
    </source>
</reference>
<comment type="function">
    <text evidence="1">Together with the chaperonin GroEL, plays an essential role in assisting protein folding. The GroEL-GroES system forms a nano-cage that allows encapsulation of the non-native substrate proteins and provides a physical environment optimized to promote and accelerate protein folding. GroES binds to the apical surface of the GroEL ring, thereby capping the opening of the GroEL channel.</text>
</comment>
<comment type="subunit">
    <text evidence="1">Heptamer of 7 subunits arranged in a ring. Interacts with the chaperonin GroEL.</text>
</comment>
<comment type="subcellular location">
    <subcellularLocation>
        <location evidence="1">Cytoplasm</location>
    </subcellularLocation>
</comment>
<comment type="similarity">
    <text evidence="1">Belongs to the GroES chaperonin family.</text>
</comment>
<evidence type="ECO:0000255" key="1">
    <source>
        <dbReference type="HAMAP-Rule" id="MF_00580"/>
    </source>
</evidence>
<protein>
    <recommendedName>
        <fullName evidence="1">Co-chaperonin GroES</fullName>
    </recommendedName>
    <alternativeName>
        <fullName evidence="1">10 kDa chaperonin</fullName>
    </alternativeName>
    <alternativeName>
        <fullName evidence="1">Chaperonin-10</fullName>
        <shortName evidence="1">Cpn10</shortName>
    </alternativeName>
</protein>
<feature type="chain" id="PRO_0000174905" description="Co-chaperonin GroES">
    <location>
        <begin position="1"/>
        <end position="95"/>
    </location>
</feature>
<proteinExistence type="inferred from homology"/>